<gene>
    <name type="primary">Pgd</name>
</gene>
<name>6PGD_DROSI</name>
<keyword id="KW-0311">Gluconate utilization</keyword>
<keyword id="KW-0521">NADP</keyword>
<keyword id="KW-0560">Oxidoreductase</keyword>
<keyword id="KW-0570">Pentose shunt</keyword>
<accession>P41573</accession>
<organism>
    <name type="scientific">Drosophila simulans</name>
    <name type="common">Fruit fly</name>
    <dbReference type="NCBI Taxonomy" id="7240"/>
    <lineage>
        <taxon>Eukaryota</taxon>
        <taxon>Metazoa</taxon>
        <taxon>Ecdysozoa</taxon>
        <taxon>Arthropoda</taxon>
        <taxon>Hexapoda</taxon>
        <taxon>Insecta</taxon>
        <taxon>Pterygota</taxon>
        <taxon>Neoptera</taxon>
        <taxon>Endopterygota</taxon>
        <taxon>Diptera</taxon>
        <taxon>Brachycera</taxon>
        <taxon>Muscomorpha</taxon>
        <taxon>Ephydroidea</taxon>
        <taxon>Drosophilidae</taxon>
        <taxon>Drosophila</taxon>
        <taxon>Sophophora</taxon>
    </lineage>
</organism>
<feature type="chain" id="PRO_0000090070" description="6-phosphogluconate dehydrogenase, decarboxylating">
    <location>
        <begin position="1"/>
        <end position="481"/>
    </location>
</feature>
<feature type="active site" description="Proton acceptor" evidence="1">
    <location>
        <position position="184"/>
    </location>
</feature>
<feature type="active site" description="Proton donor" evidence="1">
    <location>
        <position position="191"/>
    </location>
</feature>
<feature type="binding site" evidence="1">
    <location>
        <begin position="11"/>
        <end position="16"/>
    </location>
    <ligand>
        <name>NADP(+)</name>
        <dbReference type="ChEBI" id="CHEBI:58349"/>
    </ligand>
</feature>
<feature type="binding site" evidence="1">
    <location>
        <begin position="34"/>
        <end position="36"/>
    </location>
    <ligand>
        <name>NADP(+)</name>
        <dbReference type="ChEBI" id="CHEBI:58349"/>
    </ligand>
</feature>
<feature type="binding site" evidence="1">
    <location>
        <begin position="76"/>
        <end position="78"/>
    </location>
    <ligand>
        <name>NADP(+)</name>
        <dbReference type="ChEBI" id="CHEBI:58349"/>
    </ligand>
</feature>
<feature type="binding site" evidence="1">
    <location>
        <position position="104"/>
    </location>
    <ligand>
        <name>NADP(+)</name>
        <dbReference type="ChEBI" id="CHEBI:58349"/>
    </ligand>
</feature>
<feature type="binding site" description="in other chain" evidence="1">
    <location>
        <position position="104"/>
    </location>
    <ligand>
        <name>substrate</name>
        <note>ligand shared between dimeric partners</note>
    </ligand>
</feature>
<feature type="binding site" description="in other chain" evidence="1">
    <location>
        <begin position="130"/>
        <end position="132"/>
    </location>
    <ligand>
        <name>substrate</name>
        <note>ligand shared between dimeric partners</note>
    </ligand>
</feature>
<feature type="binding site" description="in other chain" evidence="1">
    <location>
        <begin position="187"/>
        <end position="188"/>
    </location>
    <ligand>
        <name>substrate</name>
        <note>ligand shared between dimeric partners</note>
    </ligand>
</feature>
<feature type="binding site" description="in other chain" evidence="1">
    <location>
        <position position="192"/>
    </location>
    <ligand>
        <name>substrate</name>
        <note>ligand shared between dimeric partners</note>
    </ligand>
</feature>
<feature type="binding site" description="in other chain" evidence="1">
    <location>
        <position position="259"/>
    </location>
    <ligand>
        <name>substrate</name>
        <note>ligand shared between dimeric partners</note>
    </ligand>
</feature>
<feature type="binding site" description="in other chain" evidence="1">
    <location>
        <position position="286"/>
    </location>
    <ligand>
        <name>substrate</name>
        <note>ligand shared between dimeric partners</note>
    </ligand>
</feature>
<feature type="binding site" evidence="1">
    <location>
        <position position="445"/>
    </location>
    <ligand>
        <name>substrate</name>
        <note>ligand shared between dimeric partners</note>
    </ligand>
</feature>
<feature type="binding site" evidence="1">
    <location>
        <position position="451"/>
    </location>
    <ligand>
        <name>substrate</name>
        <note>ligand shared between dimeric partners</note>
    </ligand>
</feature>
<evidence type="ECO:0000250" key="1"/>
<evidence type="ECO:0000305" key="2"/>
<proteinExistence type="inferred from homology"/>
<protein>
    <recommendedName>
        <fullName>6-phosphogluconate dehydrogenase, decarboxylating</fullName>
        <ecNumber>1.1.1.44</ecNumber>
    </recommendedName>
</protein>
<comment type="function">
    <text evidence="1">Catalyzes the oxidative decarboxylation of 6-phosphogluconate to ribulose 5-phosphate and CO(2), with concomitant reduction of NADP to NADPH.</text>
</comment>
<comment type="catalytic activity">
    <reaction>
        <text>6-phospho-D-gluconate + NADP(+) = D-ribulose 5-phosphate + CO2 + NADPH</text>
        <dbReference type="Rhea" id="RHEA:10116"/>
        <dbReference type="ChEBI" id="CHEBI:16526"/>
        <dbReference type="ChEBI" id="CHEBI:57783"/>
        <dbReference type="ChEBI" id="CHEBI:58121"/>
        <dbReference type="ChEBI" id="CHEBI:58349"/>
        <dbReference type="ChEBI" id="CHEBI:58759"/>
        <dbReference type="EC" id="1.1.1.44"/>
    </reaction>
</comment>
<comment type="pathway">
    <text>Carbohydrate degradation; pentose phosphate pathway; D-ribulose 5-phosphate from D-glucose 6-phosphate (oxidative stage): step 3/3.</text>
</comment>
<comment type="subunit">
    <text evidence="1">Homodimer.</text>
</comment>
<comment type="similarity">
    <text evidence="2">Belongs to the 6-phosphogluconate dehydrogenase family.</text>
</comment>
<dbReference type="EC" id="1.1.1.44"/>
<dbReference type="EMBL" id="U02288">
    <property type="protein sequence ID" value="AAA18587.1"/>
    <property type="molecule type" value="Unassigned_DNA"/>
</dbReference>
<dbReference type="SMR" id="P41573"/>
<dbReference type="OrthoDB" id="434986at2759"/>
<dbReference type="UniPathway" id="UPA00115">
    <property type="reaction ID" value="UER00410"/>
</dbReference>
<dbReference type="GO" id="GO:0050661">
    <property type="term" value="F:NADP binding"/>
    <property type="evidence" value="ECO:0007669"/>
    <property type="project" value="InterPro"/>
</dbReference>
<dbReference type="GO" id="GO:0004616">
    <property type="term" value="F:phosphogluconate dehydrogenase (decarboxylating) activity"/>
    <property type="evidence" value="ECO:0007669"/>
    <property type="project" value="UniProtKB-EC"/>
</dbReference>
<dbReference type="GO" id="GO:0019521">
    <property type="term" value="P:D-gluconate metabolic process"/>
    <property type="evidence" value="ECO:0007669"/>
    <property type="project" value="UniProtKB-KW"/>
</dbReference>
<dbReference type="GO" id="GO:0042593">
    <property type="term" value="P:glucose homeostasis"/>
    <property type="evidence" value="ECO:0007669"/>
    <property type="project" value="EnsemblMetazoa"/>
</dbReference>
<dbReference type="GO" id="GO:0009051">
    <property type="term" value="P:pentose-phosphate shunt, oxidative branch"/>
    <property type="evidence" value="ECO:0007669"/>
    <property type="project" value="EnsemblMetazoa"/>
</dbReference>
<dbReference type="FunFam" id="1.10.1040.10:FF:000002">
    <property type="entry name" value="6-phosphogluconate dehydrogenase, decarboxylating"/>
    <property type="match status" value="1"/>
</dbReference>
<dbReference type="FunFam" id="1.20.5.320:FF:000002">
    <property type="entry name" value="6-phosphogluconate dehydrogenase, decarboxylating"/>
    <property type="match status" value="1"/>
</dbReference>
<dbReference type="FunFam" id="3.40.50.720:FF:000007">
    <property type="entry name" value="6-phosphogluconate dehydrogenase, decarboxylating"/>
    <property type="match status" value="1"/>
</dbReference>
<dbReference type="Gene3D" id="1.20.5.320">
    <property type="entry name" value="6-Phosphogluconate Dehydrogenase, domain 3"/>
    <property type="match status" value="1"/>
</dbReference>
<dbReference type="Gene3D" id="1.10.1040.10">
    <property type="entry name" value="N-(1-d-carboxylethyl)-l-norvaline Dehydrogenase, domain 2"/>
    <property type="match status" value="1"/>
</dbReference>
<dbReference type="Gene3D" id="3.40.50.720">
    <property type="entry name" value="NAD(P)-binding Rossmann-like Domain"/>
    <property type="match status" value="1"/>
</dbReference>
<dbReference type="InterPro" id="IPR008927">
    <property type="entry name" value="6-PGluconate_DH-like_C_sf"/>
</dbReference>
<dbReference type="InterPro" id="IPR013328">
    <property type="entry name" value="6PGD_dom2"/>
</dbReference>
<dbReference type="InterPro" id="IPR006114">
    <property type="entry name" value="6PGDH_C"/>
</dbReference>
<dbReference type="InterPro" id="IPR006113">
    <property type="entry name" value="6PGDH_Gnd/GntZ"/>
</dbReference>
<dbReference type="InterPro" id="IPR006115">
    <property type="entry name" value="6PGDH_NADP-bd"/>
</dbReference>
<dbReference type="InterPro" id="IPR006184">
    <property type="entry name" value="6PGdom_BS"/>
</dbReference>
<dbReference type="InterPro" id="IPR036291">
    <property type="entry name" value="NAD(P)-bd_dom_sf"/>
</dbReference>
<dbReference type="InterPro" id="IPR006183">
    <property type="entry name" value="Pgluconate_DH"/>
</dbReference>
<dbReference type="NCBIfam" id="TIGR00873">
    <property type="entry name" value="gnd"/>
    <property type="match status" value="1"/>
</dbReference>
<dbReference type="NCBIfam" id="NF006765">
    <property type="entry name" value="PRK09287.1"/>
    <property type="match status" value="1"/>
</dbReference>
<dbReference type="PANTHER" id="PTHR11811">
    <property type="entry name" value="6-PHOSPHOGLUCONATE DEHYDROGENASE"/>
    <property type="match status" value="1"/>
</dbReference>
<dbReference type="Pfam" id="PF00393">
    <property type="entry name" value="6PGD"/>
    <property type="match status" value="1"/>
</dbReference>
<dbReference type="Pfam" id="PF03446">
    <property type="entry name" value="NAD_binding_2"/>
    <property type="match status" value="1"/>
</dbReference>
<dbReference type="PIRSF" id="PIRSF000109">
    <property type="entry name" value="6PGD"/>
    <property type="match status" value="1"/>
</dbReference>
<dbReference type="PRINTS" id="PR00076">
    <property type="entry name" value="6PGDHDRGNASE"/>
</dbReference>
<dbReference type="SMART" id="SM01350">
    <property type="entry name" value="6PGD"/>
    <property type="match status" value="1"/>
</dbReference>
<dbReference type="SUPFAM" id="SSF48179">
    <property type="entry name" value="6-phosphogluconate dehydrogenase C-terminal domain-like"/>
    <property type="match status" value="1"/>
</dbReference>
<dbReference type="SUPFAM" id="SSF51735">
    <property type="entry name" value="NAD(P)-binding Rossmann-fold domains"/>
    <property type="match status" value="1"/>
</dbReference>
<dbReference type="PROSITE" id="PS00461">
    <property type="entry name" value="6PGD"/>
    <property type="match status" value="1"/>
</dbReference>
<sequence>MSGQADIALIGLAVMGQNLILNMDEKGFVVCAYNRTVAKVKEFLANEAKGTNVIGADSLKDMVSKLKSPRKVMLLVKGGSAVDDFIQQLVPLLSAGDVIIDGGNSEYQDTSRRCDELAKLGLLYVGSGVSGGEEGARHGPSLMPGGHEAAWPLIQPIFQAICAKADGEPCCEWVGDGGAGHFVKMVHNGIEYGDMQLICEAYHIMQSLGLSADQMADEFGKWNSAELDSFLIEITRDILKYKDGKGHLLERIRDTAGQKGTGKWTAIAALQYGVPVTLIGEAVFSRCLSALKDERVQASSVLKGPSTKAEVANLTKFLDDIKHALYCAKIVSYAQGFMLMREAARENKWRLNYGGIALMWRGGCIIRSVFLGNIKDAYTSQPQLSNLLLDDFFKKAIERGQDSWREVVANAFRWGIPVPALSTALSFYDGYRTAKLPANLLQAQRDYFGAHTYELLGQEGQFHHTNWTGTGGNVSASTYQA</sequence>
<reference key="1">
    <citation type="journal article" date="1994" name="Genetics">
        <title>Evolutionary inferences from DNA variation at the 6-phosphogluconate dehydrogenase locus in natural populations of Drosophila: selection and geographic differentiation.</title>
        <authorList>
            <person name="Begun D.J."/>
        </authorList>
    </citation>
    <scope>NUCLEOTIDE SEQUENCE</scope>
</reference>